<feature type="chain" id="PRO_0000241481" description="Elongation factor Ts">
    <location>
        <begin position="1"/>
        <end position="288"/>
    </location>
</feature>
<feature type="region of interest" description="Involved in Mg(2+) ion dislocation from EF-Tu" evidence="1">
    <location>
        <begin position="79"/>
        <end position="82"/>
    </location>
</feature>
<sequence length="288" mass="32008">MKVDINAIKELRDLTGAGVGDCKDALTSCNGDIEKAKTYLREQGIAKAYKKSNKDVSDGLVAICIDGNKGAILEVNSETDFVARNEKFQKLVLNLAFLANQYEIENIEDFLKCEYSNNTNINDEIMSNIAVIGENIHLNKIGCLSVSSGVVCGYIHNPIVDNLGKVGAIVALESKCDVEKLKIFARQIAMHIVATKPEALSLGVLDQNIIDKERDIIKKQVEQLNKPASVLEKIIDGRMAKFYQEVVLMNQMFIMDSQFTVSELIKKKEEELGSSINIVDYKLFIINK</sequence>
<dbReference type="EMBL" id="CR925677">
    <property type="protein sequence ID" value="CAI27975.1"/>
    <property type="molecule type" value="Genomic_DNA"/>
</dbReference>
<dbReference type="RefSeq" id="WP_011255639.1">
    <property type="nucleotide sequence ID" value="NC_006831.1"/>
</dbReference>
<dbReference type="SMR" id="Q5FGZ9"/>
<dbReference type="KEGG" id="erg:ERGA_CDS_05230"/>
<dbReference type="HOGENOM" id="CLU_047155_2_0_5"/>
<dbReference type="OrthoDB" id="9808348at2"/>
<dbReference type="Proteomes" id="UP000000533">
    <property type="component" value="Chromosome"/>
</dbReference>
<dbReference type="GO" id="GO:0005737">
    <property type="term" value="C:cytoplasm"/>
    <property type="evidence" value="ECO:0007669"/>
    <property type="project" value="UniProtKB-SubCell"/>
</dbReference>
<dbReference type="GO" id="GO:0003746">
    <property type="term" value="F:translation elongation factor activity"/>
    <property type="evidence" value="ECO:0007669"/>
    <property type="project" value="UniProtKB-UniRule"/>
</dbReference>
<dbReference type="CDD" id="cd14275">
    <property type="entry name" value="UBA_EF-Ts"/>
    <property type="match status" value="1"/>
</dbReference>
<dbReference type="FunFam" id="1.10.8.10:FF:000001">
    <property type="entry name" value="Elongation factor Ts"/>
    <property type="match status" value="1"/>
</dbReference>
<dbReference type="Gene3D" id="1.10.286.20">
    <property type="match status" value="1"/>
</dbReference>
<dbReference type="Gene3D" id="1.10.8.10">
    <property type="entry name" value="DNA helicase RuvA subunit, C-terminal domain"/>
    <property type="match status" value="1"/>
</dbReference>
<dbReference type="Gene3D" id="3.30.479.20">
    <property type="entry name" value="Elongation factor Ts, dimerisation domain"/>
    <property type="match status" value="2"/>
</dbReference>
<dbReference type="HAMAP" id="MF_00050">
    <property type="entry name" value="EF_Ts"/>
    <property type="match status" value="1"/>
</dbReference>
<dbReference type="InterPro" id="IPR036402">
    <property type="entry name" value="EF-Ts_dimer_sf"/>
</dbReference>
<dbReference type="InterPro" id="IPR001816">
    <property type="entry name" value="Transl_elong_EFTs/EF1B"/>
</dbReference>
<dbReference type="InterPro" id="IPR014039">
    <property type="entry name" value="Transl_elong_EFTs/EF1B_dimer"/>
</dbReference>
<dbReference type="InterPro" id="IPR018101">
    <property type="entry name" value="Transl_elong_Ts_CS"/>
</dbReference>
<dbReference type="InterPro" id="IPR009060">
    <property type="entry name" value="UBA-like_sf"/>
</dbReference>
<dbReference type="NCBIfam" id="TIGR00116">
    <property type="entry name" value="tsf"/>
    <property type="match status" value="1"/>
</dbReference>
<dbReference type="PANTHER" id="PTHR11741">
    <property type="entry name" value="ELONGATION FACTOR TS"/>
    <property type="match status" value="1"/>
</dbReference>
<dbReference type="PANTHER" id="PTHR11741:SF0">
    <property type="entry name" value="ELONGATION FACTOR TS, MITOCHONDRIAL"/>
    <property type="match status" value="1"/>
</dbReference>
<dbReference type="Pfam" id="PF00889">
    <property type="entry name" value="EF_TS"/>
    <property type="match status" value="1"/>
</dbReference>
<dbReference type="SUPFAM" id="SSF54713">
    <property type="entry name" value="Elongation factor Ts (EF-Ts), dimerisation domain"/>
    <property type="match status" value="2"/>
</dbReference>
<dbReference type="SUPFAM" id="SSF46934">
    <property type="entry name" value="UBA-like"/>
    <property type="match status" value="1"/>
</dbReference>
<dbReference type="PROSITE" id="PS01127">
    <property type="entry name" value="EF_TS_2"/>
    <property type="match status" value="1"/>
</dbReference>
<name>EFTS_EHRRG</name>
<protein>
    <recommendedName>
        <fullName evidence="1">Elongation factor Ts</fullName>
        <shortName evidence="1">EF-Ts</shortName>
    </recommendedName>
</protein>
<evidence type="ECO:0000255" key="1">
    <source>
        <dbReference type="HAMAP-Rule" id="MF_00050"/>
    </source>
</evidence>
<accession>Q5FGZ9</accession>
<organism>
    <name type="scientific">Ehrlichia ruminantium (strain Gardel)</name>
    <dbReference type="NCBI Taxonomy" id="302409"/>
    <lineage>
        <taxon>Bacteria</taxon>
        <taxon>Pseudomonadati</taxon>
        <taxon>Pseudomonadota</taxon>
        <taxon>Alphaproteobacteria</taxon>
        <taxon>Rickettsiales</taxon>
        <taxon>Anaplasmataceae</taxon>
        <taxon>Ehrlichia</taxon>
    </lineage>
</organism>
<keyword id="KW-0963">Cytoplasm</keyword>
<keyword id="KW-0251">Elongation factor</keyword>
<keyword id="KW-0648">Protein biosynthesis</keyword>
<proteinExistence type="inferred from homology"/>
<comment type="function">
    <text evidence="1">Associates with the EF-Tu.GDP complex and induces the exchange of GDP to GTP. It remains bound to the aminoacyl-tRNA.EF-Tu.GTP complex up to the GTP hydrolysis stage on the ribosome.</text>
</comment>
<comment type="subcellular location">
    <subcellularLocation>
        <location evidence="1">Cytoplasm</location>
    </subcellularLocation>
</comment>
<comment type="similarity">
    <text evidence="1">Belongs to the EF-Ts family.</text>
</comment>
<gene>
    <name evidence="1" type="primary">tsf</name>
    <name type="ordered locus">ERGA_CDS_05230</name>
</gene>
<reference key="1">
    <citation type="journal article" date="2006" name="J. Bacteriol.">
        <title>Comparative genomic analysis of three strains of Ehrlichia ruminantium reveals an active process of genome size plasticity.</title>
        <authorList>
            <person name="Frutos R."/>
            <person name="Viari A."/>
            <person name="Ferraz C."/>
            <person name="Morgat A."/>
            <person name="Eychenie S."/>
            <person name="Kandassamy Y."/>
            <person name="Chantal I."/>
            <person name="Bensaid A."/>
            <person name="Coissac E."/>
            <person name="Vachiery N."/>
            <person name="Demaille J."/>
            <person name="Martinez D."/>
        </authorList>
    </citation>
    <scope>NUCLEOTIDE SEQUENCE [LARGE SCALE GENOMIC DNA]</scope>
    <source>
        <strain>Gardel</strain>
    </source>
</reference>